<dbReference type="EMBL" id="X57932">
    <property type="protein sequence ID" value="CAA41003.1"/>
    <property type="molecule type" value="Genomic_DNA"/>
</dbReference>
<dbReference type="EMBL" id="X57933">
    <property type="protein sequence ID" value="CAA41003.1"/>
    <property type="status" value="JOINED"/>
    <property type="molecule type" value="Genomic_DNA"/>
</dbReference>
<dbReference type="EMBL" id="X57934">
    <property type="protein sequence ID" value="CAA41003.1"/>
    <property type="status" value="JOINED"/>
    <property type="molecule type" value="Genomic_DNA"/>
</dbReference>
<dbReference type="EMBL" id="X57935">
    <property type="protein sequence ID" value="CAA41003.1"/>
    <property type="status" value="JOINED"/>
    <property type="molecule type" value="Genomic_DNA"/>
</dbReference>
<dbReference type="EMBL" id="M92161">
    <property type="protein sequence ID" value="AAA36903.1"/>
    <property type="molecule type" value="mRNA"/>
</dbReference>
<dbReference type="PIR" id="S16237">
    <property type="entry name" value="A54663"/>
</dbReference>
<dbReference type="RefSeq" id="NP_001040596.1">
    <property type="nucleotide sequence ID" value="NM_001047131.1"/>
</dbReference>
<dbReference type="SMR" id="P25142"/>
<dbReference type="FunCoup" id="P25142">
    <property type="interactions" value="59"/>
</dbReference>
<dbReference type="STRING" id="9544.ENSMMUP00000066718"/>
<dbReference type="PaxDb" id="9544-ENSMMUP00000010524"/>
<dbReference type="Ensembl" id="ENSMMUT00000011226.4">
    <property type="protein sequence ID" value="ENSMMUP00000010524.2"/>
    <property type="gene ID" value="ENSMMUG00000008023.4"/>
</dbReference>
<dbReference type="GeneID" id="709332"/>
<dbReference type="KEGG" id="mcc:709332"/>
<dbReference type="CTD" id="4477"/>
<dbReference type="VEuPathDB" id="HostDB:ENSMMUG00000008023"/>
<dbReference type="VGNC" id="VGNC:74937">
    <property type="gene designation" value="MSMB"/>
</dbReference>
<dbReference type="eggNOG" id="ENOG502SF48">
    <property type="taxonomic scope" value="Eukaryota"/>
</dbReference>
<dbReference type="GeneTree" id="ENSGT00940000154371"/>
<dbReference type="HOGENOM" id="CLU_144891_0_0_1"/>
<dbReference type="InParanoid" id="P25142"/>
<dbReference type="OrthoDB" id="6076852at2759"/>
<dbReference type="TreeFam" id="TF338336"/>
<dbReference type="Proteomes" id="UP000006718">
    <property type="component" value="Chromosome 9"/>
</dbReference>
<dbReference type="Bgee" id="ENSMMUG00000008023">
    <property type="expression patterns" value="Expressed in olfactory segment of nasal mucosa and 10 other cell types or tissues"/>
</dbReference>
<dbReference type="ExpressionAtlas" id="P25142">
    <property type="expression patterns" value="baseline"/>
</dbReference>
<dbReference type="GO" id="GO:0005576">
    <property type="term" value="C:extracellular region"/>
    <property type="evidence" value="ECO:0007669"/>
    <property type="project" value="UniProtKB-SubCell"/>
</dbReference>
<dbReference type="FunFam" id="2.10.70.10:FF:000137">
    <property type="entry name" value="Beta-microseminoprotein"/>
    <property type="match status" value="1"/>
</dbReference>
<dbReference type="Gene3D" id="2.20.25.590">
    <property type="match status" value="1"/>
</dbReference>
<dbReference type="Gene3D" id="2.10.70.10">
    <property type="entry name" value="Complement Module, domain 1"/>
    <property type="match status" value="1"/>
</dbReference>
<dbReference type="InterPro" id="IPR008735">
    <property type="entry name" value="PSP94"/>
</dbReference>
<dbReference type="PANTHER" id="PTHR10500">
    <property type="entry name" value="BETA-MICROSEMINOPROTEIN"/>
    <property type="match status" value="1"/>
</dbReference>
<dbReference type="PANTHER" id="PTHR10500:SF8">
    <property type="entry name" value="BETA-MICROSEMINOPROTEIN"/>
    <property type="match status" value="1"/>
</dbReference>
<dbReference type="Pfam" id="PF05825">
    <property type="entry name" value="PSP94"/>
    <property type="match status" value="1"/>
</dbReference>
<protein>
    <recommendedName>
        <fullName>Beta-microseminoprotein</fullName>
    </recommendedName>
    <alternativeName>
        <fullName>Prostate secreted seminal plasma protein</fullName>
    </alternativeName>
    <alternativeName>
        <fullName>Prostate secretory protein of 94 amino acids</fullName>
        <shortName>PSP-94</shortName>
        <shortName>PSP94</shortName>
    </alternativeName>
</protein>
<evidence type="ECO:0000250" key="1"/>
<evidence type="ECO:0000305" key="2"/>
<sequence>MNVLLGGFVIFATFVTLCNASCSFIPNERFPGDSTRECTDLKGNKHPINSKWKTDNCERCTCYKTEIICCTLIATPVGYDKKKCQRIFKKEDCKYIVVEKKNPKKTCPIDQWIL</sequence>
<proteinExistence type="inferred from homology"/>
<reference key="1">
    <citation type="journal article" date="1991" name="Biochim. Biophys. Acta">
        <title>Prostatic secretory protein PSP94: gene organization and promoter sequence in rhesus monkey and human.</title>
        <authorList>
            <person name="Nolet S."/>
            <person name="Mbikay M."/>
            <person name="Chretien M."/>
        </authorList>
    </citation>
    <scope>NUCLEOTIDE SEQUENCE [GENOMIC DNA]</scope>
    <source>
        <tissue>Liver</tissue>
    </source>
</reference>
<reference key="2">
    <citation type="journal article" date="1991" name="Genomics">
        <title>Rapid evolution of prostatic protein PSP94 suggested by sequence divergence between rhesus monkey and human cDNAs.</title>
        <authorList>
            <person name="Nolet S."/>
            <person name="St Louis D."/>
            <person name="Mbikay M."/>
            <person name="Chretien M."/>
        </authorList>
    </citation>
    <scope>NUCLEOTIDE SEQUENCE [MRNA]</scope>
</reference>
<comment type="subunit">
    <text evidence="1">Homodimer; Interacts with PI16.</text>
</comment>
<comment type="subcellular location">
    <subcellularLocation>
        <location>Secreted</location>
    </subcellularLocation>
    <text evidence="1">Sperm surface.</text>
</comment>
<comment type="similarity">
    <text evidence="2">Belongs to the beta-microseminoprotein family.</text>
</comment>
<keyword id="KW-1015">Disulfide bond</keyword>
<keyword id="KW-1185">Reference proteome</keyword>
<keyword id="KW-0964">Secreted</keyword>
<keyword id="KW-0732">Signal</keyword>
<gene>
    <name type="primary">MSMB</name>
</gene>
<organism>
    <name type="scientific">Macaca mulatta</name>
    <name type="common">Rhesus macaque</name>
    <dbReference type="NCBI Taxonomy" id="9544"/>
    <lineage>
        <taxon>Eukaryota</taxon>
        <taxon>Metazoa</taxon>
        <taxon>Chordata</taxon>
        <taxon>Craniata</taxon>
        <taxon>Vertebrata</taxon>
        <taxon>Euteleostomi</taxon>
        <taxon>Mammalia</taxon>
        <taxon>Eutheria</taxon>
        <taxon>Euarchontoglires</taxon>
        <taxon>Primates</taxon>
        <taxon>Haplorrhini</taxon>
        <taxon>Catarrhini</taxon>
        <taxon>Cercopithecidae</taxon>
        <taxon>Cercopithecinae</taxon>
        <taxon>Macaca</taxon>
    </lineage>
</organism>
<name>MSMB_MACMU</name>
<accession>P25142</accession>
<feature type="signal peptide" evidence="1">
    <location>
        <begin position="1"/>
        <end position="20"/>
    </location>
</feature>
<feature type="chain" id="PRO_0000019269" description="Beta-microseminoprotein">
    <location>
        <begin position="21"/>
        <end position="114"/>
    </location>
</feature>
<feature type="disulfide bond" evidence="1">
    <location>
        <begin position="22"/>
        <end position="70"/>
    </location>
</feature>
<feature type="disulfide bond" evidence="1">
    <location>
        <begin position="38"/>
        <end position="62"/>
    </location>
</feature>
<feature type="disulfide bond" evidence="1">
    <location>
        <begin position="57"/>
        <end position="93"/>
    </location>
</feature>
<feature type="disulfide bond" evidence="1">
    <location>
        <begin position="60"/>
        <end position="69"/>
    </location>
</feature>
<feature type="disulfide bond" evidence="1">
    <location>
        <begin position="84"/>
        <end position="107"/>
    </location>
</feature>